<name>NRDR_RALN1</name>
<evidence type="ECO:0000255" key="1">
    <source>
        <dbReference type="HAMAP-Rule" id="MF_00440"/>
    </source>
</evidence>
<sequence length="149" mass="17575">MKCPFCGHAATQVIDTRMSEEGDTVRRRRRCESCDRRFTTYERIELFFPAVVKKNGSRVDYDRNKVKDSMRLALRKRPVSAEAIDEAIARIEEKLLSHGEKEIGSDRIGELVMRELKRLDKIGYIRFASVYRSFEDVSEFRDMLDEFRQ</sequence>
<accession>Q8Y1G2</accession>
<comment type="function">
    <text evidence="1">Negatively regulates transcription of bacterial ribonucleotide reductase nrd genes and operons by binding to NrdR-boxes.</text>
</comment>
<comment type="cofactor">
    <cofactor evidence="1">
        <name>Zn(2+)</name>
        <dbReference type="ChEBI" id="CHEBI:29105"/>
    </cofactor>
    <text evidence="1">Binds 1 zinc ion.</text>
</comment>
<comment type="similarity">
    <text evidence="1">Belongs to the NrdR family.</text>
</comment>
<gene>
    <name evidence="1" type="primary">nrdR</name>
    <name type="ordered locus">RSc0728</name>
    <name type="ORF">RS05125</name>
</gene>
<proteinExistence type="inferred from homology"/>
<reference key="1">
    <citation type="journal article" date="2002" name="Nature">
        <title>Genome sequence of the plant pathogen Ralstonia solanacearum.</title>
        <authorList>
            <person name="Salanoubat M."/>
            <person name="Genin S."/>
            <person name="Artiguenave F."/>
            <person name="Gouzy J."/>
            <person name="Mangenot S."/>
            <person name="Arlat M."/>
            <person name="Billault A."/>
            <person name="Brottier P."/>
            <person name="Camus J.-C."/>
            <person name="Cattolico L."/>
            <person name="Chandler M."/>
            <person name="Choisne N."/>
            <person name="Claudel-Renard C."/>
            <person name="Cunnac S."/>
            <person name="Demange N."/>
            <person name="Gaspin C."/>
            <person name="Lavie M."/>
            <person name="Moisan A."/>
            <person name="Robert C."/>
            <person name="Saurin W."/>
            <person name="Schiex T."/>
            <person name="Siguier P."/>
            <person name="Thebault P."/>
            <person name="Whalen M."/>
            <person name="Wincker P."/>
            <person name="Levy M."/>
            <person name="Weissenbach J."/>
            <person name="Boucher C.A."/>
        </authorList>
    </citation>
    <scope>NUCLEOTIDE SEQUENCE [LARGE SCALE GENOMIC DNA]</scope>
    <source>
        <strain>ATCC BAA-1114 / GMI1000</strain>
    </source>
</reference>
<dbReference type="EMBL" id="AL646052">
    <property type="protein sequence ID" value="CAD14258.1"/>
    <property type="molecule type" value="Genomic_DNA"/>
</dbReference>
<dbReference type="RefSeq" id="WP_011000683.1">
    <property type="nucleotide sequence ID" value="NC_003295.1"/>
</dbReference>
<dbReference type="SMR" id="Q8Y1G2"/>
<dbReference type="STRING" id="267608.RSc0728"/>
<dbReference type="EnsemblBacteria" id="CAD14258">
    <property type="protein sequence ID" value="CAD14258"/>
    <property type="gene ID" value="RSc0728"/>
</dbReference>
<dbReference type="GeneID" id="97322013"/>
<dbReference type="KEGG" id="rso:RSc0728"/>
<dbReference type="eggNOG" id="COG1327">
    <property type="taxonomic scope" value="Bacteria"/>
</dbReference>
<dbReference type="HOGENOM" id="CLU_108412_0_1_4"/>
<dbReference type="Proteomes" id="UP000001436">
    <property type="component" value="Chromosome"/>
</dbReference>
<dbReference type="GO" id="GO:0005524">
    <property type="term" value="F:ATP binding"/>
    <property type="evidence" value="ECO:0007669"/>
    <property type="project" value="UniProtKB-KW"/>
</dbReference>
<dbReference type="GO" id="GO:0003677">
    <property type="term" value="F:DNA binding"/>
    <property type="evidence" value="ECO:0007669"/>
    <property type="project" value="UniProtKB-KW"/>
</dbReference>
<dbReference type="GO" id="GO:0008270">
    <property type="term" value="F:zinc ion binding"/>
    <property type="evidence" value="ECO:0007669"/>
    <property type="project" value="UniProtKB-UniRule"/>
</dbReference>
<dbReference type="GO" id="GO:0045892">
    <property type="term" value="P:negative regulation of DNA-templated transcription"/>
    <property type="evidence" value="ECO:0007669"/>
    <property type="project" value="UniProtKB-UniRule"/>
</dbReference>
<dbReference type="HAMAP" id="MF_00440">
    <property type="entry name" value="NrdR"/>
    <property type="match status" value="1"/>
</dbReference>
<dbReference type="InterPro" id="IPR005144">
    <property type="entry name" value="ATP-cone_dom"/>
</dbReference>
<dbReference type="InterPro" id="IPR055173">
    <property type="entry name" value="NrdR-like_N"/>
</dbReference>
<dbReference type="InterPro" id="IPR003796">
    <property type="entry name" value="RNR_NrdR-like"/>
</dbReference>
<dbReference type="NCBIfam" id="TIGR00244">
    <property type="entry name" value="transcriptional regulator NrdR"/>
    <property type="match status" value="1"/>
</dbReference>
<dbReference type="PANTHER" id="PTHR30455">
    <property type="entry name" value="TRANSCRIPTIONAL REPRESSOR NRDR"/>
    <property type="match status" value="1"/>
</dbReference>
<dbReference type="PANTHER" id="PTHR30455:SF2">
    <property type="entry name" value="TRANSCRIPTIONAL REPRESSOR NRDR"/>
    <property type="match status" value="1"/>
</dbReference>
<dbReference type="Pfam" id="PF03477">
    <property type="entry name" value="ATP-cone"/>
    <property type="match status" value="1"/>
</dbReference>
<dbReference type="Pfam" id="PF22811">
    <property type="entry name" value="Zn_ribbon_NrdR"/>
    <property type="match status" value="1"/>
</dbReference>
<dbReference type="PROSITE" id="PS51161">
    <property type="entry name" value="ATP_CONE"/>
    <property type="match status" value="1"/>
</dbReference>
<organism>
    <name type="scientific">Ralstonia nicotianae (strain ATCC BAA-1114 / GMI1000)</name>
    <name type="common">Ralstonia solanacearum</name>
    <dbReference type="NCBI Taxonomy" id="267608"/>
    <lineage>
        <taxon>Bacteria</taxon>
        <taxon>Pseudomonadati</taxon>
        <taxon>Pseudomonadota</taxon>
        <taxon>Betaproteobacteria</taxon>
        <taxon>Burkholderiales</taxon>
        <taxon>Burkholderiaceae</taxon>
        <taxon>Ralstonia</taxon>
        <taxon>Ralstonia solanacearum species complex</taxon>
    </lineage>
</organism>
<keyword id="KW-0067">ATP-binding</keyword>
<keyword id="KW-0238">DNA-binding</keyword>
<keyword id="KW-0479">Metal-binding</keyword>
<keyword id="KW-0547">Nucleotide-binding</keyword>
<keyword id="KW-1185">Reference proteome</keyword>
<keyword id="KW-0678">Repressor</keyword>
<keyword id="KW-0804">Transcription</keyword>
<keyword id="KW-0805">Transcription regulation</keyword>
<keyword id="KW-0862">Zinc</keyword>
<keyword id="KW-0863">Zinc-finger</keyword>
<protein>
    <recommendedName>
        <fullName evidence="1">Transcriptional repressor NrdR</fullName>
    </recommendedName>
</protein>
<feature type="chain" id="PRO_0000182337" description="Transcriptional repressor NrdR">
    <location>
        <begin position="1"/>
        <end position="149"/>
    </location>
</feature>
<feature type="domain" description="ATP-cone" evidence="1">
    <location>
        <begin position="49"/>
        <end position="139"/>
    </location>
</feature>
<feature type="zinc finger region" evidence="1">
    <location>
        <begin position="3"/>
        <end position="34"/>
    </location>
</feature>